<keyword id="KW-0067">ATP-binding</keyword>
<keyword id="KW-0436">Ligase</keyword>
<keyword id="KW-0479">Metal-binding</keyword>
<keyword id="KW-0547">Nucleotide-binding</keyword>
<keyword id="KW-0671">Queuosine biosynthesis</keyword>
<keyword id="KW-1185">Reference proteome</keyword>
<keyword id="KW-0862">Zinc</keyword>
<organism>
    <name type="scientific">Gluconacetobacter diazotrophicus (strain ATCC 49037 / DSM 5601 / CCUG 37298 / CIP 103539 / LMG 7603 / PAl5)</name>
    <dbReference type="NCBI Taxonomy" id="272568"/>
    <lineage>
        <taxon>Bacteria</taxon>
        <taxon>Pseudomonadati</taxon>
        <taxon>Pseudomonadota</taxon>
        <taxon>Alphaproteobacteria</taxon>
        <taxon>Acetobacterales</taxon>
        <taxon>Acetobacteraceae</taxon>
        <taxon>Gluconacetobacter</taxon>
    </lineage>
</organism>
<evidence type="ECO:0000255" key="1">
    <source>
        <dbReference type="HAMAP-Rule" id="MF_01633"/>
    </source>
</evidence>
<evidence type="ECO:0000305" key="2"/>
<dbReference type="EC" id="6.3.4.20" evidence="1"/>
<dbReference type="EMBL" id="AM889285">
    <property type="protein sequence ID" value="CAP56898.1"/>
    <property type="molecule type" value="Genomic_DNA"/>
</dbReference>
<dbReference type="EMBL" id="CP001189">
    <property type="protein sequence ID" value="ACI53120.1"/>
    <property type="molecule type" value="Genomic_DNA"/>
</dbReference>
<dbReference type="RefSeq" id="WP_012227177.1">
    <property type="nucleotide sequence ID" value="NC_010125.1"/>
</dbReference>
<dbReference type="RefSeq" id="WP_012554930.1">
    <property type="nucleotide sequence ID" value="NC_011365.1"/>
</dbReference>
<dbReference type="SMR" id="A9HRF6"/>
<dbReference type="STRING" id="272568.GDI2955"/>
<dbReference type="KEGG" id="gdi:GDI2955"/>
<dbReference type="KEGG" id="gdj:Gdia_3394"/>
<dbReference type="eggNOG" id="COG0603">
    <property type="taxonomic scope" value="Bacteria"/>
</dbReference>
<dbReference type="HOGENOM" id="CLU_081854_0_0_5"/>
<dbReference type="OrthoDB" id="9789567at2"/>
<dbReference type="UniPathway" id="UPA00391"/>
<dbReference type="Proteomes" id="UP000001176">
    <property type="component" value="Chromosome"/>
</dbReference>
<dbReference type="GO" id="GO:0005524">
    <property type="term" value="F:ATP binding"/>
    <property type="evidence" value="ECO:0007669"/>
    <property type="project" value="UniProtKB-UniRule"/>
</dbReference>
<dbReference type="GO" id="GO:0016879">
    <property type="term" value="F:ligase activity, forming carbon-nitrogen bonds"/>
    <property type="evidence" value="ECO:0007669"/>
    <property type="project" value="UniProtKB-UniRule"/>
</dbReference>
<dbReference type="GO" id="GO:0008270">
    <property type="term" value="F:zinc ion binding"/>
    <property type="evidence" value="ECO:0007669"/>
    <property type="project" value="UniProtKB-UniRule"/>
</dbReference>
<dbReference type="GO" id="GO:0008616">
    <property type="term" value="P:queuosine biosynthetic process"/>
    <property type="evidence" value="ECO:0007669"/>
    <property type="project" value="UniProtKB-UniRule"/>
</dbReference>
<dbReference type="CDD" id="cd01995">
    <property type="entry name" value="QueC-like"/>
    <property type="match status" value="1"/>
</dbReference>
<dbReference type="Gene3D" id="3.40.50.620">
    <property type="entry name" value="HUPs"/>
    <property type="match status" value="1"/>
</dbReference>
<dbReference type="HAMAP" id="MF_01633">
    <property type="entry name" value="QueC"/>
    <property type="match status" value="1"/>
</dbReference>
<dbReference type="InterPro" id="IPR018317">
    <property type="entry name" value="QueC"/>
</dbReference>
<dbReference type="InterPro" id="IPR014729">
    <property type="entry name" value="Rossmann-like_a/b/a_fold"/>
</dbReference>
<dbReference type="NCBIfam" id="TIGR00364">
    <property type="entry name" value="7-cyano-7-deazaguanine synthase QueC"/>
    <property type="match status" value="1"/>
</dbReference>
<dbReference type="PANTHER" id="PTHR42914">
    <property type="entry name" value="7-CYANO-7-DEAZAGUANINE SYNTHASE"/>
    <property type="match status" value="1"/>
</dbReference>
<dbReference type="PANTHER" id="PTHR42914:SF1">
    <property type="entry name" value="7-CYANO-7-DEAZAGUANINE SYNTHASE"/>
    <property type="match status" value="1"/>
</dbReference>
<dbReference type="Pfam" id="PF06508">
    <property type="entry name" value="QueC"/>
    <property type="match status" value="1"/>
</dbReference>
<dbReference type="PIRSF" id="PIRSF006293">
    <property type="entry name" value="ExsB"/>
    <property type="match status" value="1"/>
</dbReference>
<dbReference type="SUPFAM" id="SSF52402">
    <property type="entry name" value="Adenine nucleotide alpha hydrolases-like"/>
    <property type="match status" value="1"/>
</dbReference>
<comment type="function">
    <text evidence="1">Catalyzes the ATP-dependent conversion of 7-carboxy-7-deazaguanine (CDG) to 7-cyano-7-deazaguanine (preQ(0)).</text>
</comment>
<comment type="catalytic activity">
    <reaction evidence="1">
        <text>7-carboxy-7-deazaguanine + NH4(+) + ATP = 7-cyano-7-deazaguanine + ADP + phosphate + H2O + H(+)</text>
        <dbReference type="Rhea" id="RHEA:27982"/>
        <dbReference type="ChEBI" id="CHEBI:15377"/>
        <dbReference type="ChEBI" id="CHEBI:15378"/>
        <dbReference type="ChEBI" id="CHEBI:28938"/>
        <dbReference type="ChEBI" id="CHEBI:30616"/>
        <dbReference type="ChEBI" id="CHEBI:43474"/>
        <dbReference type="ChEBI" id="CHEBI:45075"/>
        <dbReference type="ChEBI" id="CHEBI:61036"/>
        <dbReference type="ChEBI" id="CHEBI:456216"/>
        <dbReference type="EC" id="6.3.4.20"/>
    </reaction>
</comment>
<comment type="cofactor">
    <cofactor evidence="1">
        <name>Zn(2+)</name>
        <dbReference type="ChEBI" id="CHEBI:29105"/>
    </cofactor>
    <text evidence="1">Binds 1 zinc ion per subunit.</text>
</comment>
<comment type="pathway">
    <text evidence="1">Purine metabolism; 7-cyano-7-deazaguanine biosynthesis.</text>
</comment>
<comment type="similarity">
    <text evidence="1">Belongs to the QueC family.</text>
</comment>
<accession>A9HRF6</accession>
<accession>B5ZM20</accession>
<feature type="chain" id="PRO_0000336914" description="7-cyano-7-deazaguanine synthase">
    <location>
        <begin position="1"/>
        <end position="245"/>
    </location>
</feature>
<feature type="binding site" evidence="1">
    <location>
        <begin position="19"/>
        <end position="29"/>
    </location>
    <ligand>
        <name>ATP</name>
        <dbReference type="ChEBI" id="CHEBI:30616"/>
    </ligand>
</feature>
<feature type="binding site" evidence="1">
    <location>
        <position position="207"/>
    </location>
    <ligand>
        <name>Zn(2+)</name>
        <dbReference type="ChEBI" id="CHEBI:29105"/>
    </ligand>
</feature>
<feature type="binding site" evidence="1">
    <location>
        <position position="222"/>
    </location>
    <ligand>
        <name>Zn(2+)</name>
        <dbReference type="ChEBI" id="CHEBI:29105"/>
    </ligand>
</feature>
<feature type="binding site" evidence="1">
    <location>
        <position position="225"/>
    </location>
    <ligand>
        <name>Zn(2+)</name>
        <dbReference type="ChEBI" id="CHEBI:29105"/>
    </ligand>
</feature>
<feature type="binding site" evidence="1">
    <location>
        <position position="228"/>
    </location>
    <ligand>
        <name>Zn(2+)</name>
        <dbReference type="ChEBI" id="CHEBI:29105"/>
    </ligand>
</feature>
<feature type="sequence conflict" description="In Ref. 2; ACI53120." evidence="2" ref="2">
    <original>T</original>
    <variation>A</variation>
    <location>
        <position position="88"/>
    </location>
</feature>
<feature type="sequence conflict" description="In Ref. 2; ACI53120." evidence="2" ref="2">
    <original>L</original>
    <variation>V</variation>
    <location>
        <position position="191"/>
    </location>
</feature>
<protein>
    <recommendedName>
        <fullName evidence="1">7-cyano-7-deazaguanine synthase</fullName>
        <ecNumber evidence="1">6.3.4.20</ecNumber>
    </recommendedName>
    <alternativeName>
        <fullName evidence="1">7-cyano-7-carbaguanine synthase</fullName>
    </alternativeName>
    <alternativeName>
        <fullName evidence="1">PreQ(0) synthase</fullName>
    </alternativeName>
    <alternativeName>
        <fullName evidence="1">Queuosine biosynthesis protein QueC</fullName>
    </alternativeName>
</protein>
<name>QUEC_GLUDA</name>
<sequence length="245" mass="26507">MATSLTPADPLQEAAIVLFSGGQDSATCLAWALSRFGRVETVGFDYGQRHAVELACRARLRDGMAALDPDWATRLGQDHTLALDALGTVSDTALTRDAAITMNENGLPSTFVPGRNLIFLTFAAALAARRGARHIVGGMCETDYSGYPDCRDDTIKAMQVALNLGMASRYVLHTPLMWIDKAETWRMAEGLGGADLVELINRESHSCYLGVRDVMHPWGHGCGTCPACMLRRAGWERYVADGADA</sequence>
<gene>
    <name evidence="1" type="primary">queC</name>
    <name type="ordered locus">GDI2955</name>
    <name type="ordered locus">Gdia_3394</name>
</gene>
<proteinExistence type="inferred from homology"/>
<reference key="1">
    <citation type="journal article" date="2009" name="BMC Genomics">
        <title>Complete genome sequence of the sugarcane nitrogen-fixing endophyte Gluconacetobacter diazotrophicus Pal5.</title>
        <authorList>
            <person name="Bertalan M."/>
            <person name="Albano R."/>
            <person name="de Padua V."/>
            <person name="Rouws L."/>
            <person name="Rojas C."/>
            <person name="Hemerly A."/>
            <person name="Teixeira K."/>
            <person name="Schwab S."/>
            <person name="Araujo J."/>
            <person name="Oliveira A."/>
            <person name="Franca L."/>
            <person name="Magalhaes V."/>
            <person name="Alqueres S."/>
            <person name="Cardoso A."/>
            <person name="Almeida W."/>
            <person name="Loureiro M.M."/>
            <person name="Nogueira E."/>
            <person name="Cidade D."/>
            <person name="Oliveira D."/>
            <person name="Simao T."/>
            <person name="Macedo J."/>
            <person name="Valadao A."/>
            <person name="Dreschsel M."/>
            <person name="Freitas F."/>
            <person name="Vidal M."/>
            <person name="Guedes H."/>
            <person name="Rodrigues E."/>
            <person name="Meneses C."/>
            <person name="Brioso P."/>
            <person name="Pozzer L."/>
            <person name="Figueiredo D."/>
            <person name="Montano H."/>
            <person name="Junior J."/>
            <person name="de Souza Filho G."/>
            <person name="Martin Quintana Flores V."/>
            <person name="Ferreira B."/>
            <person name="Branco A."/>
            <person name="Gonzalez P."/>
            <person name="Guillobel H."/>
            <person name="Lemos M."/>
            <person name="Seibel L."/>
            <person name="Macedo J."/>
            <person name="Alves-Ferreira M."/>
            <person name="Sachetto-Martins G."/>
            <person name="Coelho A."/>
            <person name="Santos E."/>
            <person name="Amaral G."/>
            <person name="Neves A."/>
            <person name="Pacheco A.B."/>
            <person name="Carvalho D."/>
            <person name="Lery L."/>
            <person name="Bisch P."/>
            <person name="Rossle S.C."/>
            <person name="Urmenyi T."/>
            <person name="Rael Pereira A."/>
            <person name="Silva R."/>
            <person name="Rondinelli E."/>
            <person name="von Kruger W."/>
            <person name="Martins O."/>
            <person name="Baldani J.I."/>
            <person name="Ferreira P.C."/>
        </authorList>
    </citation>
    <scope>NUCLEOTIDE SEQUENCE [LARGE SCALE GENOMIC DNA]</scope>
    <source>
        <strain>ATCC 49037 / DSM 5601 / CCUG 37298 / CIP 103539 / LMG 7603 / PAl5</strain>
    </source>
</reference>
<reference key="2">
    <citation type="journal article" date="2010" name="Stand. Genomic Sci.">
        <title>Two genome sequences of the same bacterial strain, Gluconacetobacter diazotrophicus PAl 5, suggest a new standard in genome sequence submission.</title>
        <authorList>
            <person name="Giongo A."/>
            <person name="Tyler H.L."/>
            <person name="Zipperer U.N."/>
            <person name="Triplett E.W."/>
        </authorList>
    </citation>
    <scope>NUCLEOTIDE SEQUENCE [LARGE SCALE GENOMIC DNA]</scope>
    <source>
        <strain>ATCC 49037 / DSM 5601 / CCUG 37298 / CIP 103539 / LMG 7603 / PAl5</strain>
    </source>
</reference>